<comment type="function">
    <text evidence="1">Plays an important role in the de novo pathway of purine nucleotide biosynthesis. Catalyzes the first committed step in the biosynthesis of AMP from IMP.</text>
</comment>
<comment type="catalytic activity">
    <reaction evidence="1">
        <text>IMP + L-aspartate + GTP = N(6)-(1,2-dicarboxyethyl)-AMP + GDP + phosphate + 2 H(+)</text>
        <dbReference type="Rhea" id="RHEA:15753"/>
        <dbReference type="ChEBI" id="CHEBI:15378"/>
        <dbReference type="ChEBI" id="CHEBI:29991"/>
        <dbReference type="ChEBI" id="CHEBI:37565"/>
        <dbReference type="ChEBI" id="CHEBI:43474"/>
        <dbReference type="ChEBI" id="CHEBI:57567"/>
        <dbReference type="ChEBI" id="CHEBI:58053"/>
        <dbReference type="ChEBI" id="CHEBI:58189"/>
        <dbReference type="EC" id="6.3.4.4"/>
    </reaction>
</comment>
<comment type="cofactor">
    <cofactor evidence="1">
        <name>Mg(2+)</name>
        <dbReference type="ChEBI" id="CHEBI:18420"/>
    </cofactor>
    <text evidence="1">Binds 1 Mg(2+) ion per subunit.</text>
</comment>
<comment type="pathway">
    <text evidence="1">Purine metabolism; AMP biosynthesis via de novo pathway; AMP from IMP: step 1/2.</text>
</comment>
<comment type="subunit">
    <text evidence="1">Homodimer.</text>
</comment>
<comment type="subcellular location">
    <subcellularLocation>
        <location evidence="1">Cytoplasm</location>
    </subcellularLocation>
</comment>
<comment type="similarity">
    <text evidence="1">Belongs to the adenylosuccinate synthetase family.</text>
</comment>
<gene>
    <name evidence="1" type="primary">purA</name>
    <name type="ordered locus">EcSMS35_4648</name>
</gene>
<reference key="1">
    <citation type="journal article" date="2008" name="J. Bacteriol.">
        <title>Insights into the environmental resistance gene pool from the genome sequence of the multidrug-resistant environmental isolate Escherichia coli SMS-3-5.</title>
        <authorList>
            <person name="Fricke W.F."/>
            <person name="Wright M.S."/>
            <person name="Lindell A.H."/>
            <person name="Harkins D.M."/>
            <person name="Baker-Austin C."/>
            <person name="Ravel J."/>
            <person name="Stepanauskas R."/>
        </authorList>
    </citation>
    <scope>NUCLEOTIDE SEQUENCE [LARGE SCALE GENOMIC DNA]</scope>
    <source>
        <strain>SMS-3-5 / SECEC</strain>
    </source>
</reference>
<name>PURA_ECOSM</name>
<dbReference type="EC" id="6.3.4.4" evidence="1"/>
<dbReference type="EMBL" id="CP000970">
    <property type="protein sequence ID" value="ACB15775.1"/>
    <property type="molecule type" value="Genomic_DNA"/>
</dbReference>
<dbReference type="RefSeq" id="WP_000527955.1">
    <property type="nucleotide sequence ID" value="NC_010498.1"/>
</dbReference>
<dbReference type="SMR" id="B1LQJ7"/>
<dbReference type="GeneID" id="75202411"/>
<dbReference type="KEGG" id="ecm:EcSMS35_4648"/>
<dbReference type="HOGENOM" id="CLU_029848_0_0_6"/>
<dbReference type="UniPathway" id="UPA00075">
    <property type="reaction ID" value="UER00335"/>
</dbReference>
<dbReference type="Proteomes" id="UP000007011">
    <property type="component" value="Chromosome"/>
</dbReference>
<dbReference type="GO" id="GO:0005737">
    <property type="term" value="C:cytoplasm"/>
    <property type="evidence" value="ECO:0007669"/>
    <property type="project" value="UniProtKB-SubCell"/>
</dbReference>
<dbReference type="GO" id="GO:0004019">
    <property type="term" value="F:adenylosuccinate synthase activity"/>
    <property type="evidence" value="ECO:0007669"/>
    <property type="project" value="UniProtKB-UniRule"/>
</dbReference>
<dbReference type="GO" id="GO:0005525">
    <property type="term" value="F:GTP binding"/>
    <property type="evidence" value="ECO:0007669"/>
    <property type="project" value="UniProtKB-UniRule"/>
</dbReference>
<dbReference type="GO" id="GO:0000287">
    <property type="term" value="F:magnesium ion binding"/>
    <property type="evidence" value="ECO:0007669"/>
    <property type="project" value="UniProtKB-UniRule"/>
</dbReference>
<dbReference type="GO" id="GO:0044208">
    <property type="term" value="P:'de novo' AMP biosynthetic process"/>
    <property type="evidence" value="ECO:0007669"/>
    <property type="project" value="UniProtKB-UniRule"/>
</dbReference>
<dbReference type="GO" id="GO:0046040">
    <property type="term" value="P:IMP metabolic process"/>
    <property type="evidence" value="ECO:0007669"/>
    <property type="project" value="TreeGrafter"/>
</dbReference>
<dbReference type="CDD" id="cd03108">
    <property type="entry name" value="AdSS"/>
    <property type="match status" value="1"/>
</dbReference>
<dbReference type="FunFam" id="1.10.300.10:FF:000001">
    <property type="entry name" value="Adenylosuccinate synthetase"/>
    <property type="match status" value="1"/>
</dbReference>
<dbReference type="FunFam" id="3.90.170.10:FF:000001">
    <property type="entry name" value="Adenylosuccinate synthetase"/>
    <property type="match status" value="1"/>
</dbReference>
<dbReference type="Gene3D" id="3.40.440.10">
    <property type="entry name" value="Adenylosuccinate Synthetase, subunit A, domain 1"/>
    <property type="match status" value="1"/>
</dbReference>
<dbReference type="Gene3D" id="1.10.300.10">
    <property type="entry name" value="Adenylosuccinate Synthetase, subunit A, domain 2"/>
    <property type="match status" value="1"/>
</dbReference>
<dbReference type="Gene3D" id="3.90.170.10">
    <property type="entry name" value="Adenylosuccinate Synthetase, subunit A, domain 3"/>
    <property type="match status" value="1"/>
</dbReference>
<dbReference type="HAMAP" id="MF_00011">
    <property type="entry name" value="Adenylosucc_synth"/>
    <property type="match status" value="1"/>
</dbReference>
<dbReference type="InterPro" id="IPR018220">
    <property type="entry name" value="Adenylosuccin_syn_GTP-bd"/>
</dbReference>
<dbReference type="InterPro" id="IPR033128">
    <property type="entry name" value="Adenylosuccin_syn_Lys_AS"/>
</dbReference>
<dbReference type="InterPro" id="IPR042109">
    <property type="entry name" value="Adenylosuccinate_synth_dom1"/>
</dbReference>
<dbReference type="InterPro" id="IPR042110">
    <property type="entry name" value="Adenylosuccinate_synth_dom2"/>
</dbReference>
<dbReference type="InterPro" id="IPR042111">
    <property type="entry name" value="Adenylosuccinate_synth_dom3"/>
</dbReference>
<dbReference type="InterPro" id="IPR001114">
    <property type="entry name" value="Adenylosuccinate_synthetase"/>
</dbReference>
<dbReference type="InterPro" id="IPR027417">
    <property type="entry name" value="P-loop_NTPase"/>
</dbReference>
<dbReference type="NCBIfam" id="NF002223">
    <property type="entry name" value="PRK01117.1"/>
    <property type="match status" value="1"/>
</dbReference>
<dbReference type="NCBIfam" id="TIGR00184">
    <property type="entry name" value="purA"/>
    <property type="match status" value="1"/>
</dbReference>
<dbReference type="PANTHER" id="PTHR11846">
    <property type="entry name" value="ADENYLOSUCCINATE SYNTHETASE"/>
    <property type="match status" value="1"/>
</dbReference>
<dbReference type="PANTHER" id="PTHR11846:SF0">
    <property type="entry name" value="ADENYLOSUCCINATE SYNTHETASE"/>
    <property type="match status" value="1"/>
</dbReference>
<dbReference type="Pfam" id="PF00709">
    <property type="entry name" value="Adenylsucc_synt"/>
    <property type="match status" value="1"/>
</dbReference>
<dbReference type="SMART" id="SM00788">
    <property type="entry name" value="Adenylsucc_synt"/>
    <property type="match status" value="1"/>
</dbReference>
<dbReference type="SUPFAM" id="SSF52540">
    <property type="entry name" value="P-loop containing nucleoside triphosphate hydrolases"/>
    <property type="match status" value="1"/>
</dbReference>
<dbReference type="PROSITE" id="PS01266">
    <property type="entry name" value="ADENYLOSUCCIN_SYN_1"/>
    <property type="match status" value="1"/>
</dbReference>
<dbReference type="PROSITE" id="PS00513">
    <property type="entry name" value="ADENYLOSUCCIN_SYN_2"/>
    <property type="match status" value="1"/>
</dbReference>
<accession>B1LQJ7</accession>
<organism>
    <name type="scientific">Escherichia coli (strain SMS-3-5 / SECEC)</name>
    <dbReference type="NCBI Taxonomy" id="439855"/>
    <lineage>
        <taxon>Bacteria</taxon>
        <taxon>Pseudomonadati</taxon>
        <taxon>Pseudomonadota</taxon>
        <taxon>Gammaproteobacteria</taxon>
        <taxon>Enterobacterales</taxon>
        <taxon>Enterobacteriaceae</taxon>
        <taxon>Escherichia</taxon>
    </lineage>
</organism>
<sequence>MGNNVVVLGTQWGDEGKGKIVDLLTERAKYVVRYQGGHNAGHTLVINGEKTVLHLIPSGILRENVTSIIGNGVVLSPAALMKEMKELEDRGIPVRERLLLSEACPLILDYHVALDNAREKARGAKAIGTTGRGIGPAYEDKVARRGLRVGDLFDKETFAEKLKEVMEYHNFQLVNYYKAEAVDYQKVLDDTMAVADILTSMVVDVSDLLDQARQRGDFVMFEGAQGTLLDIDHGTYPYVTSSNTTAGGVATGSGLGPRYVDYVLGILKAYSTRVGAGPFPTELFDETGEFLCKQGNEFGATTGRRRRTGWLDTVAVRRAVQLNSLSGFCLTKLDVLDGLKEVKLCVAYRMPDGREVTTTPLAADDWKGVEPIYETMPGWSESTFGVKDRSGLPQAALNYIKRIEELTGVPIDIISTGPDRTETMILRDPFDA</sequence>
<feature type="chain" id="PRO_1000194752" description="Adenylosuccinate synthetase">
    <location>
        <begin position="1"/>
        <end position="432"/>
    </location>
</feature>
<feature type="active site" description="Proton acceptor" evidence="1">
    <location>
        <position position="14"/>
    </location>
</feature>
<feature type="active site" description="Proton donor" evidence="1">
    <location>
        <position position="42"/>
    </location>
</feature>
<feature type="binding site" evidence="1">
    <location>
        <begin position="13"/>
        <end position="19"/>
    </location>
    <ligand>
        <name>GTP</name>
        <dbReference type="ChEBI" id="CHEBI:37565"/>
    </ligand>
</feature>
<feature type="binding site" description="in other chain" evidence="1">
    <location>
        <begin position="14"/>
        <end position="17"/>
    </location>
    <ligand>
        <name>IMP</name>
        <dbReference type="ChEBI" id="CHEBI:58053"/>
        <note>ligand shared between dimeric partners</note>
    </ligand>
</feature>
<feature type="binding site" evidence="1">
    <location>
        <position position="14"/>
    </location>
    <ligand>
        <name>Mg(2+)</name>
        <dbReference type="ChEBI" id="CHEBI:18420"/>
    </ligand>
</feature>
<feature type="binding site" description="in other chain" evidence="1">
    <location>
        <begin position="39"/>
        <end position="42"/>
    </location>
    <ligand>
        <name>IMP</name>
        <dbReference type="ChEBI" id="CHEBI:58053"/>
        <note>ligand shared between dimeric partners</note>
    </ligand>
</feature>
<feature type="binding site" evidence="1">
    <location>
        <begin position="41"/>
        <end position="43"/>
    </location>
    <ligand>
        <name>GTP</name>
        <dbReference type="ChEBI" id="CHEBI:37565"/>
    </ligand>
</feature>
<feature type="binding site" evidence="1">
    <location>
        <position position="41"/>
    </location>
    <ligand>
        <name>Mg(2+)</name>
        <dbReference type="ChEBI" id="CHEBI:18420"/>
    </ligand>
</feature>
<feature type="binding site" description="in other chain" evidence="1">
    <location>
        <position position="130"/>
    </location>
    <ligand>
        <name>IMP</name>
        <dbReference type="ChEBI" id="CHEBI:58053"/>
        <note>ligand shared between dimeric partners</note>
    </ligand>
</feature>
<feature type="binding site" evidence="1">
    <location>
        <position position="144"/>
    </location>
    <ligand>
        <name>IMP</name>
        <dbReference type="ChEBI" id="CHEBI:58053"/>
        <note>ligand shared between dimeric partners</note>
    </ligand>
</feature>
<feature type="binding site" description="in other chain" evidence="1">
    <location>
        <position position="225"/>
    </location>
    <ligand>
        <name>IMP</name>
        <dbReference type="ChEBI" id="CHEBI:58053"/>
        <note>ligand shared between dimeric partners</note>
    </ligand>
</feature>
<feature type="binding site" description="in other chain" evidence="1">
    <location>
        <position position="240"/>
    </location>
    <ligand>
        <name>IMP</name>
        <dbReference type="ChEBI" id="CHEBI:58053"/>
        <note>ligand shared between dimeric partners</note>
    </ligand>
</feature>
<feature type="binding site" evidence="1">
    <location>
        <begin position="300"/>
        <end position="306"/>
    </location>
    <ligand>
        <name>substrate</name>
    </ligand>
</feature>
<feature type="binding site" description="in other chain" evidence="1">
    <location>
        <position position="304"/>
    </location>
    <ligand>
        <name>IMP</name>
        <dbReference type="ChEBI" id="CHEBI:58053"/>
        <note>ligand shared between dimeric partners</note>
    </ligand>
</feature>
<feature type="binding site" evidence="1">
    <location>
        <position position="306"/>
    </location>
    <ligand>
        <name>GTP</name>
        <dbReference type="ChEBI" id="CHEBI:37565"/>
    </ligand>
</feature>
<feature type="binding site" evidence="1">
    <location>
        <begin position="332"/>
        <end position="334"/>
    </location>
    <ligand>
        <name>GTP</name>
        <dbReference type="ChEBI" id="CHEBI:37565"/>
    </ligand>
</feature>
<feature type="binding site" evidence="1">
    <location>
        <begin position="415"/>
        <end position="417"/>
    </location>
    <ligand>
        <name>GTP</name>
        <dbReference type="ChEBI" id="CHEBI:37565"/>
    </ligand>
</feature>
<evidence type="ECO:0000255" key="1">
    <source>
        <dbReference type="HAMAP-Rule" id="MF_00011"/>
    </source>
</evidence>
<protein>
    <recommendedName>
        <fullName evidence="1">Adenylosuccinate synthetase</fullName>
        <shortName evidence="1">AMPSase</shortName>
        <shortName evidence="1">AdSS</shortName>
        <ecNumber evidence="1">6.3.4.4</ecNumber>
    </recommendedName>
    <alternativeName>
        <fullName evidence="1">IMP--aspartate ligase</fullName>
    </alternativeName>
</protein>
<keyword id="KW-0963">Cytoplasm</keyword>
<keyword id="KW-0342">GTP-binding</keyword>
<keyword id="KW-0436">Ligase</keyword>
<keyword id="KW-0460">Magnesium</keyword>
<keyword id="KW-0479">Metal-binding</keyword>
<keyword id="KW-0547">Nucleotide-binding</keyword>
<keyword id="KW-0658">Purine biosynthesis</keyword>
<proteinExistence type="inferred from homology"/>